<proteinExistence type="evidence at protein level"/>
<reference key="1">
    <citation type="journal article" date="2009" name="PLoS Genet.">
        <title>The genome of Nectria haematococca: contribution of supernumerary chromosomes to gene expansion.</title>
        <authorList>
            <person name="Coleman J.J."/>
            <person name="Rounsley S.D."/>
            <person name="Rodriguez-Carres M."/>
            <person name="Kuo A."/>
            <person name="Wasmann C.C."/>
            <person name="Grimwood J."/>
            <person name="Schmutz J."/>
            <person name="Taga M."/>
            <person name="White G.J."/>
            <person name="Zhou S."/>
            <person name="Schwartz D.C."/>
            <person name="Freitag M."/>
            <person name="Ma L.-J."/>
            <person name="Danchin E.G.J."/>
            <person name="Henrissat B."/>
            <person name="Coutinho P.M."/>
            <person name="Nelson D.R."/>
            <person name="Straney D."/>
            <person name="Napoli C.A."/>
            <person name="Barker B.M."/>
            <person name="Gribskov M."/>
            <person name="Rep M."/>
            <person name="Kroken S."/>
            <person name="Molnar I."/>
            <person name="Rensing C."/>
            <person name="Kennell J.C."/>
            <person name="Zamora J."/>
            <person name="Farman M.L."/>
            <person name="Selker E.U."/>
            <person name="Salamov A."/>
            <person name="Shapiro H."/>
            <person name="Pangilinan J."/>
            <person name="Lindquist E."/>
            <person name="Lamers C."/>
            <person name="Grigoriev I.V."/>
            <person name="Geiser D.M."/>
            <person name="Covert S.F."/>
            <person name="Temporini E."/>
            <person name="VanEtten H.D."/>
        </authorList>
    </citation>
    <scope>NUCLEOTIDE SEQUENCE [LARGE SCALE GENOMIC DNA]</scope>
    <source>
        <strain>ATCC MYA-4622 / CBS 123669 / FGSC 9596 / NRRL 45880 / 77-13-4</strain>
    </source>
</reference>
<reference key="2">
    <citation type="journal article" date="2014" name="Biochem. J.">
        <title>Polyglycine hydrolases secreted by Pleosporineae fungi that target the linker region of plant class IV chitinases.</title>
        <authorList>
            <person name="Naumann T.A."/>
            <person name="Wicklow D.T."/>
            <person name="Price N.P."/>
        </authorList>
    </citation>
    <scope>FUNCTION</scope>
    <scope>CATALYTIC ACTIVITY</scope>
    <scope>SUBCELLULAR LOCATION</scope>
</reference>
<keyword id="KW-0325">Glycoprotein</keyword>
<keyword id="KW-0378">Hydrolase</keyword>
<keyword id="KW-0479">Metal-binding</keyword>
<keyword id="KW-0482">Metalloprotease</keyword>
<keyword id="KW-0645">Protease</keyword>
<keyword id="KW-1185">Reference proteome</keyword>
<keyword id="KW-0964">Secreted</keyword>
<keyword id="KW-0732">Signal</keyword>
<keyword id="KW-0843">Virulence</keyword>
<keyword id="KW-0862">Zinc</keyword>
<keyword id="KW-0865">Zymogen</keyword>
<comment type="function">
    <text evidence="4">Secreted metalloproteinase that probably acts as a virulence factor (PubMed:24627966). Cleaves Z.mays Endochitinase A (CHIA) between residues 'Gly-29' and 'Cys-30' (PubMed:24627966).</text>
</comment>
<comment type="cofactor">
    <cofactor evidence="1">
        <name>Zn(2+)</name>
        <dbReference type="ChEBI" id="CHEBI:29105"/>
    </cofactor>
    <text evidence="1">Binds 1 zinc ion per subunit.</text>
</comment>
<comment type="subcellular location">
    <subcellularLocation>
        <location evidence="4">Secreted</location>
    </subcellularLocation>
</comment>
<comment type="similarity">
    <text evidence="6">Belongs to the peptidase M36 family.</text>
</comment>
<protein>
    <recommendedName>
        <fullName>Extracellular metalloproteinase MEP</fullName>
        <ecNumber evidence="4">3.4.24.-</ecNumber>
    </recommendedName>
    <alternativeName>
        <fullName>Elastinolytic metalloproteinase MEP</fullName>
    </alternativeName>
    <alternativeName>
        <fullName>Fungalysin MEP</fullName>
    </alternativeName>
    <alternativeName>
        <fullName evidence="5">FvCMP</fullName>
    </alternativeName>
</protein>
<accession>C7Z3B7</accession>
<dbReference type="EC" id="3.4.24.-" evidence="4"/>
<dbReference type="EMBL" id="GG698907">
    <property type="protein sequence ID" value="EEU41806.1"/>
    <property type="molecule type" value="Genomic_DNA"/>
</dbReference>
<dbReference type="RefSeq" id="XP_003047519.1">
    <property type="nucleotide sequence ID" value="XM_003047473.1"/>
</dbReference>
<dbReference type="SMR" id="C7Z3B7"/>
<dbReference type="STRING" id="660122.C7Z3B7"/>
<dbReference type="MEROPS" id="M36.001"/>
<dbReference type="GlyCosmos" id="C7Z3B7">
    <property type="glycosylation" value="1 site, No reported glycans"/>
</dbReference>
<dbReference type="EnsemblFungi" id="NechaT87892">
    <property type="protein sequence ID" value="NechaP87892"/>
    <property type="gene ID" value="NechaG87892"/>
</dbReference>
<dbReference type="GeneID" id="9675951"/>
<dbReference type="KEGG" id="nhe:NECHADRAFT_87892"/>
<dbReference type="VEuPathDB" id="FungiDB:NECHADRAFT_87892"/>
<dbReference type="eggNOG" id="ENOG502QTDC">
    <property type="taxonomic scope" value="Eukaryota"/>
</dbReference>
<dbReference type="HOGENOM" id="CLU_012703_3_0_1"/>
<dbReference type="InParanoid" id="C7Z3B7"/>
<dbReference type="OMA" id="IRKDSYT"/>
<dbReference type="OrthoDB" id="3227768at2759"/>
<dbReference type="Proteomes" id="UP000005206">
    <property type="component" value="Unassembled WGS sequence"/>
</dbReference>
<dbReference type="GO" id="GO:0005576">
    <property type="term" value="C:extracellular region"/>
    <property type="evidence" value="ECO:0007669"/>
    <property type="project" value="UniProtKB-SubCell"/>
</dbReference>
<dbReference type="GO" id="GO:0004222">
    <property type="term" value="F:metalloendopeptidase activity"/>
    <property type="evidence" value="ECO:0007669"/>
    <property type="project" value="InterPro"/>
</dbReference>
<dbReference type="GO" id="GO:0008270">
    <property type="term" value="F:zinc ion binding"/>
    <property type="evidence" value="ECO:0007669"/>
    <property type="project" value="InterPro"/>
</dbReference>
<dbReference type="GO" id="GO:0006508">
    <property type="term" value="P:proteolysis"/>
    <property type="evidence" value="ECO:0007669"/>
    <property type="project" value="UniProtKB-KW"/>
</dbReference>
<dbReference type="CDD" id="cd09596">
    <property type="entry name" value="M36"/>
    <property type="match status" value="1"/>
</dbReference>
<dbReference type="Gene3D" id="3.10.170.10">
    <property type="match status" value="1"/>
</dbReference>
<dbReference type="Gene3D" id="1.10.390.10">
    <property type="entry name" value="Neutral Protease Domain 2"/>
    <property type="match status" value="1"/>
</dbReference>
<dbReference type="InterPro" id="IPR011096">
    <property type="entry name" value="FTP_domain"/>
</dbReference>
<dbReference type="InterPro" id="IPR050371">
    <property type="entry name" value="Fungal_virulence_M36"/>
</dbReference>
<dbReference type="InterPro" id="IPR001842">
    <property type="entry name" value="Peptidase_M36"/>
</dbReference>
<dbReference type="InterPro" id="IPR027268">
    <property type="entry name" value="Peptidase_M4/M1_CTD_sf"/>
</dbReference>
<dbReference type="PANTHER" id="PTHR33478">
    <property type="entry name" value="EXTRACELLULAR METALLOPROTEINASE MEP"/>
    <property type="match status" value="1"/>
</dbReference>
<dbReference type="PANTHER" id="PTHR33478:SF1">
    <property type="entry name" value="EXTRACELLULAR METALLOPROTEINASE MEP"/>
    <property type="match status" value="1"/>
</dbReference>
<dbReference type="Pfam" id="PF07504">
    <property type="entry name" value="FTP"/>
    <property type="match status" value="1"/>
</dbReference>
<dbReference type="Pfam" id="PF02128">
    <property type="entry name" value="Peptidase_M36"/>
    <property type="match status" value="1"/>
</dbReference>
<dbReference type="PRINTS" id="PR00999">
    <property type="entry name" value="FUNGALYSIN"/>
</dbReference>
<dbReference type="SUPFAM" id="SSF55486">
    <property type="entry name" value="Metalloproteases ('zincins'), catalytic domain"/>
    <property type="match status" value="1"/>
</dbReference>
<dbReference type="PROSITE" id="PS00142">
    <property type="entry name" value="ZINC_PROTEASE"/>
    <property type="match status" value="1"/>
</dbReference>
<gene>
    <name type="primary">MEP</name>
    <name type="ORF">NECHADRAFT_87892</name>
</gene>
<sequence>MRSVDSLLLLGLTGLASQANAHPAKRQPNDSPLSKRGVDLDAFRLPELAKYVPQDEVPDISNARIAPSSDYTKTAEEFVKSVVGKATFRLVSDHYVGTNGVAHVRFKQTVNDIDVDNADFNVNIGADGKVFSYGNSFYTGKIPGPLVKRDTSDPVTALKSTVEVLDLPVDASDAKAEPKGDEHYTFTDTSGTVKKPEAKLVYLIDGEQNLKLTWRVETDVLDNWLLTYVDADKTEKVVGVVDYVADLATYEVYPWGVNDPSKGSRSVVEDPWNIATSEFTWISDGSANYTTTRGNNAIAQVNPSGGTAYLNNYRPSSSSLEFEYTFSTTQTDPVSYRDASITQLFYTANKYHDLLHLLGFNEAAGNFEVNNNGQGGAGNDFVILNSQDGSGTNNANFATPADGSPGRMRMYLWTYSTPRRDSSFDAGVVIHEYTHGLSNRLTGGPANAGCLSGTESGGMGEGWSDFMATAVHLGARDTRSTNHVIGDWVYNNANGIRAYPYSTSLTTNPYTYRSVNSLSGVHAVGTYWATALYEVLWNLIDKHGKNDADTPTFDSNGVPTDGKYLAMKLVIDGMALQPCNPNMVQARDAILDADVALTGGDNQCELWTGFAKRGLGTGARYSSTSRTESFALPSGVC</sequence>
<name>MEP_FUSV7</name>
<organism>
    <name type="scientific">Fusarium vanettenii (strain ATCC MYA-4622 / CBS 123669 / FGSC 9596 / NRRL 45880 / 77-13-4)</name>
    <name type="common">Fusarium solani subsp. pisi</name>
    <dbReference type="NCBI Taxonomy" id="660122"/>
    <lineage>
        <taxon>Eukaryota</taxon>
        <taxon>Fungi</taxon>
        <taxon>Dikarya</taxon>
        <taxon>Ascomycota</taxon>
        <taxon>Pezizomycotina</taxon>
        <taxon>Sordariomycetes</taxon>
        <taxon>Hypocreomycetidae</taxon>
        <taxon>Hypocreales</taxon>
        <taxon>Nectriaceae</taxon>
        <taxon>Fusarium</taxon>
        <taxon>Fusarium solani species complex</taxon>
        <taxon>Fusarium vanettenii</taxon>
    </lineage>
</organism>
<feature type="signal peptide" evidence="2">
    <location>
        <begin position="1"/>
        <end position="21"/>
    </location>
</feature>
<feature type="propeptide" id="PRO_0000407187" evidence="1">
    <location>
        <begin position="22"/>
        <end position="246"/>
    </location>
</feature>
<feature type="chain" id="PRO_0000407188" description="Extracellular metalloproteinase MEP">
    <location>
        <begin position="247"/>
        <end position="637"/>
    </location>
</feature>
<feature type="active site" evidence="3">
    <location>
        <position position="432"/>
    </location>
</feature>
<feature type="binding site" evidence="3">
    <location>
        <position position="431"/>
    </location>
    <ligand>
        <name>Zn(2+)</name>
        <dbReference type="ChEBI" id="CHEBI:29105"/>
        <note>catalytic</note>
    </ligand>
</feature>
<feature type="binding site" evidence="3">
    <location>
        <position position="435"/>
    </location>
    <ligand>
        <name>Zn(2+)</name>
        <dbReference type="ChEBI" id="CHEBI:29105"/>
        <note>catalytic</note>
    </ligand>
</feature>
<feature type="glycosylation site" description="N-linked (GlcNAc...) asparagine" evidence="2">
    <location>
        <position position="288"/>
    </location>
</feature>
<evidence type="ECO:0000250" key="1">
    <source>
        <dbReference type="UniProtKB" id="P46075"/>
    </source>
</evidence>
<evidence type="ECO:0000255" key="2"/>
<evidence type="ECO:0000255" key="3">
    <source>
        <dbReference type="PROSITE-ProRule" id="PRU10095"/>
    </source>
</evidence>
<evidence type="ECO:0000269" key="4">
    <source>
    </source>
</evidence>
<evidence type="ECO:0000303" key="5">
    <source>
    </source>
</evidence>
<evidence type="ECO:0000305" key="6"/>